<keyword id="KW-0067">ATP-binding</keyword>
<keyword id="KW-0963">Cytoplasm</keyword>
<keyword id="KW-0436">Ligase</keyword>
<keyword id="KW-0547">Nucleotide-binding</keyword>
<keyword id="KW-1185">Reference proteome</keyword>
<keyword id="KW-0694">RNA-binding</keyword>
<keyword id="KW-0819">tRNA processing</keyword>
<keyword id="KW-0820">tRNA-binding</keyword>
<evidence type="ECO:0000255" key="1">
    <source>
        <dbReference type="HAMAP-Rule" id="MF_01539"/>
    </source>
</evidence>
<proteinExistence type="inferred from homology"/>
<comment type="function">
    <text evidence="1">Catalyzes the formation of N(4)-acetylcytidine (ac(4)C) at the wobble position of elongator tRNA(Met), using acetate and ATP as substrates. First activates an acetate ion to form acetyladenylate (Ac-AMP) and then transfers the acetyl group to tRNA to form ac(4)C34.</text>
</comment>
<comment type="catalytic activity">
    <reaction evidence="1">
        <text>cytidine(34) in elongator tRNA(Met) + acetate + ATP = N(4)-acetylcytidine(34) in elongator tRNA(Met) + AMP + diphosphate</text>
        <dbReference type="Rhea" id="RHEA:58144"/>
        <dbReference type="Rhea" id="RHEA-COMP:10693"/>
        <dbReference type="Rhea" id="RHEA-COMP:10694"/>
        <dbReference type="ChEBI" id="CHEBI:30089"/>
        <dbReference type="ChEBI" id="CHEBI:30616"/>
        <dbReference type="ChEBI" id="CHEBI:33019"/>
        <dbReference type="ChEBI" id="CHEBI:74900"/>
        <dbReference type="ChEBI" id="CHEBI:82748"/>
        <dbReference type="ChEBI" id="CHEBI:456215"/>
    </reaction>
</comment>
<comment type="subcellular location">
    <subcellularLocation>
        <location evidence="1">Cytoplasm</location>
    </subcellularLocation>
</comment>
<comment type="similarity">
    <text evidence="1">Belongs to the TmcAL family.</text>
</comment>
<organism>
    <name type="scientific">Clostridium novyi (strain NT)</name>
    <dbReference type="NCBI Taxonomy" id="386415"/>
    <lineage>
        <taxon>Bacteria</taxon>
        <taxon>Bacillati</taxon>
        <taxon>Bacillota</taxon>
        <taxon>Clostridia</taxon>
        <taxon>Eubacteriales</taxon>
        <taxon>Clostridiaceae</taxon>
        <taxon>Clostridium</taxon>
    </lineage>
</organism>
<name>TMCAL_CLONN</name>
<feature type="chain" id="PRO_0000300167" description="tRNA(Met) cytidine acetate ligase">
    <location>
        <begin position="1"/>
        <end position="400"/>
    </location>
</feature>
<feature type="binding site" evidence="1">
    <location>
        <begin position="7"/>
        <end position="20"/>
    </location>
    <ligand>
        <name>ATP</name>
        <dbReference type="ChEBI" id="CHEBI:30616"/>
    </ligand>
</feature>
<feature type="binding site" evidence="1">
    <location>
        <position position="102"/>
    </location>
    <ligand>
        <name>ATP</name>
        <dbReference type="ChEBI" id="CHEBI:30616"/>
    </ligand>
</feature>
<feature type="binding site" evidence="1">
    <location>
        <position position="165"/>
    </location>
    <ligand>
        <name>ATP</name>
        <dbReference type="ChEBI" id="CHEBI:30616"/>
    </ligand>
</feature>
<feature type="binding site" evidence="1">
    <location>
        <position position="190"/>
    </location>
    <ligand>
        <name>ATP</name>
        <dbReference type="ChEBI" id="CHEBI:30616"/>
    </ligand>
</feature>
<reference key="1">
    <citation type="journal article" date="2006" name="Nat. Biotechnol.">
        <title>The genome and transcriptomes of the anti-tumor agent Clostridium novyi-NT.</title>
        <authorList>
            <person name="Bettegowda C."/>
            <person name="Huang X."/>
            <person name="Lin J."/>
            <person name="Cheong I."/>
            <person name="Kohli M."/>
            <person name="Szabo S.A."/>
            <person name="Zhang X."/>
            <person name="Diaz L.A. Jr."/>
            <person name="Velculescu V.E."/>
            <person name="Parmigiani G."/>
            <person name="Kinzler K.W."/>
            <person name="Vogelstein B."/>
            <person name="Zhou S."/>
        </authorList>
    </citation>
    <scope>NUCLEOTIDE SEQUENCE [LARGE SCALE GENOMIC DNA]</scope>
    <source>
        <strain>NT</strain>
    </source>
</reference>
<gene>
    <name evidence="1" type="primary">tmcAL</name>
    <name type="ordered locus">NT01CX_2226</name>
</gene>
<dbReference type="EC" id="6.3.4.-" evidence="1"/>
<dbReference type="EMBL" id="CP000382">
    <property type="protein sequence ID" value="ABK61650.1"/>
    <property type="molecule type" value="Genomic_DNA"/>
</dbReference>
<dbReference type="RefSeq" id="WP_011722296.1">
    <property type="nucleotide sequence ID" value="NC_008593.1"/>
</dbReference>
<dbReference type="SMR" id="A0Q0Z7"/>
<dbReference type="STRING" id="386415.NT01CX_2226"/>
<dbReference type="KEGG" id="cno:NT01CX_2226"/>
<dbReference type="eggNOG" id="COG1323">
    <property type="taxonomic scope" value="Bacteria"/>
</dbReference>
<dbReference type="HOGENOM" id="CLU_038915_0_1_9"/>
<dbReference type="Proteomes" id="UP000008220">
    <property type="component" value="Chromosome"/>
</dbReference>
<dbReference type="GO" id="GO:0005737">
    <property type="term" value="C:cytoplasm"/>
    <property type="evidence" value="ECO:0007669"/>
    <property type="project" value="UniProtKB-SubCell"/>
</dbReference>
<dbReference type="GO" id="GO:0005524">
    <property type="term" value="F:ATP binding"/>
    <property type="evidence" value="ECO:0007669"/>
    <property type="project" value="UniProtKB-KW"/>
</dbReference>
<dbReference type="GO" id="GO:0016879">
    <property type="term" value="F:ligase activity, forming carbon-nitrogen bonds"/>
    <property type="evidence" value="ECO:0007669"/>
    <property type="project" value="UniProtKB-UniRule"/>
</dbReference>
<dbReference type="GO" id="GO:0000049">
    <property type="term" value="F:tRNA binding"/>
    <property type="evidence" value="ECO:0007669"/>
    <property type="project" value="UniProtKB-KW"/>
</dbReference>
<dbReference type="GO" id="GO:0006400">
    <property type="term" value="P:tRNA modification"/>
    <property type="evidence" value="ECO:0007669"/>
    <property type="project" value="UniProtKB-UniRule"/>
</dbReference>
<dbReference type="Gene3D" id="3.40.50.620">
    <property type="entry name" value="HUPs"/>
    <property type="match status" value="1"/>
</dbReference>
<dbReference type="HAMAP" id="MF_01539">
    <property type="entry name" value="TmcAL"/>
    <property type="match status" value="1"/>
</dbReference>
<dbReference type="InterPro" id="IPR014729">
    <property type="entry name" value="Rossmann-like_a/b/a_fold"/>
</dbReference>
<dbReference type="InterPro" id="IPR008513">
    <property type="entry name" value="tRNA(Met)_cyd_acetate_ligase"/>
</dbReference>
<dbReference type="NCBIfam" id="NF010191">
    <property type="entry name" value="PRK13670.1"/>
    <property type="match status" value="1"/>
</dbReference>
<dbReference type="PANTHER" id="PTHR37825">
    <property type="entry name" value="TRNA(MET) CYTIDINE ACETATE LIGASE"/>
    <property type="match status" value="1"/>
</dbReference>
<dbReference type="PANTHER" id="PTHR37825:SF1">
    <property type="entry name" value="TRNA(MET) CYTIDINE ACETATE LIGASE"/>
    <property type="match status" value="1"/>
</dbReference>
<dbReference type="Pfam" id="PF05636">
    <property type="entry name" value="HIGH_NTase1"/>
    <property type="match status" value="1"/>
</dbReference>
<dbReference type="SUPFAM" id="SSF52374">
    <property type="entry name" value="Nucleotidylyl transferase"/>
    <property type="match status" value="1"/>
</dbReference>
<accession>A0Q0Z7</accession>
<sequence length="400" mass="45775">MNITGIITEYNPLHKGHIYHINKTKELTSCDGIVCIMSGNFVQRGIPAIMDKWTRCELALNSGVDLVIELPSVYSLSSAEFFAYGSISLLNSIGIINNICFGSESGNIDDIKSIAKILNNEPSEFKNHLKDYLDKGVSYPVARSKALVEYFNDNLETQEILKSSNNILGIEYCKSLLKLKSTIIPYTIQRKGSNYNDDKLESKFSSATAIRSHVKNSKNINILKDILPSKTFNYLYDKFNNNNLVFEDSMFSFIKYKSLTLKNKLENLPDVKEGLHNKIYSELKNSNSFYELVSNIKSKRYAYTRISRILCQYFIGMENFNLEYLRTKKSPYGRVLGFNDTGRKILKEMKKKSSIPIYMKLPKTLNDTLKLDIQSTYAYSMINKSVSYDSDFKTSPIYLK</sequence>
<protein>
    <recommendedName>
        <fullName evidence="1">tRNA(Met) cytidine acetate ligase</fullName>
        <ecNumber evidence="1">6.3.4.-</ecNumber>
    </recommendedName>
</protein>